<sequence length="381" mass="41752">MIISSANDYREAARRRVPPFMFHYADGGSFSERTLERNVTDLADLALRQRVLKDMSQLDTEIELFGEKLAMPAVLAPVGACGMYARRGEVQAAQAAENKGIPFTLSTVSICPIEEVTAAIKRPMWFQLYVLKDRGFMKHVLERAKAAGCSTLVFTVDMPTPGARYRDRHSGMSGDYKEIRRALQAVTHPFWAWDVGIKGKPHTLGNVSAYTGKAVGLDDYVVWLGENFDPSISWKDLEWIRDFWDGPMVIKGILDPEDAKDAVRFGADGIVVSNHGGRQLDGALSSARALPSIADAVKGDIKILADSGIRNGLDIVRMLALGADATMLGRAFVYALGAAGKAGVENMLDIFKKEMHVAMTLTSNQKISDITRDALVDLSKL</sequence>
<organism>
    <name type="scientific">Actinobacillus pleuropneumoniae serotype 7 (strain AP76)</name>
    <dbReference type="NCBI Taxonomy" id="537457"/>
    <lineage>
        <taxon>Bacteria</taxon>
        <taxon>Pseudomonadati</taxon>
        <taxon>Pseudomonadota</taxon>
        <taxon>Gammaproteobacteria</taxon>
        <taxon>Pasteurellales</taxon>
        <taxon>Pasteurellaceae</taxon>
        <taxon>Actinobacillus</taxon>
    </lineage>
</organism>
<proteinExistence type="inferred from homology"/>
<protein>
    <recommendedName>
        <fullName evidence="1">L-lactate dehydrogenase</fullName>
        <ecNumber evidence="1">1.1.-.-</ecNumber>
    </recommendedName>
</protein>
<keyword id="KW-0997">Cell inner membrane</keyword>
<keyword id="KW-1003">Cell membrane</keyword>
<keyword id="KW-0285">Flavoprotein</keyword>
<keyword id="KW-0288">FMN</keyword>
<keyword id="KW-0472">Membrane</keyword>
<keyword id="KW-0560">Oxidoreductase</keyword>
<feature type="chain" id="PRO_0000383411" description="L-lactate dehydrogenase">
    <location>
        <begin position="1"/>
        <end position="381"/>
    </location>
</feature>
<feature type="domain" description="FMN hydroxy acid dehydrogenase" evidence="1">
    <location>
        <begin position="1"/>
        <end position="380"/>
    </location>
</feature>
<feature type="active site" description="Proton acceptor" evidence="1">
    <location>
        <position position="275"/>
    </location>
</feature>
<feature type="binding site" evidence="1">
    <location>
        <position position="24"/>
    </location>
    <ligand>
        <name>substrate</name>
    </ligand>
</feature>
<feature type="binding site" evidence="1">
    <location>
        <position position="106"/>
    </location>
    <ligand>
        <name>FMN</name>
        <dbReference type="ChEBI" id="CHEBI:58210"/>
    </ligand>
</feature>
<feature type="binding site" evidence="1">
    <location>
        <position position="127"/>
    </location>
    <ligand>
        <name>FMN</name>
        <dbReference type="ChEBI" id="CHEBI:58210"/>
    </ligand>
</feature>
<feature type="binding site" evidence="1">
    <location>
        <position position="129"/>
    </location>
    <ligand>
        <name>substrate</name>
    </ligand>
</feature>
<feature type="binding site" evidence="1">
    <location>
        <position position="155"/>
    </location>
    <ligand>
        <name>FMN</name>
        <dbReference type="ChEBI" id="CHEBI:58210"/>
    </ligand>
</feature>
<feature type="binding site" evidence="1">
    <location>
        <position position="164"/>
    </location>
    <ligand>
        <name>substrate</name>
    </ligand>
</feature>
<feature type="binding site" evidence="1">
    <location>
        <position position="251"/>
    </location>
    <ligand>
        <name>FMN</name>
        <dbReference type="ChEBI" id="CHEBI:58210"/>
    </ligand>
</feature>
<feature type="binding site" evidence="1">
    <location>
        <position position="278"/>
    </location>
    <ligand>
        <name>substrate</name>
    </ligand>
</feature>
<feature type="binding site" evidence="1">
    <location>
        <begin position="306"/>
        <end position="330"/>
    </location>
    <ligand>
        <name>FMN</name>
        <dbReference type="ChEBI" id="CHEBI:58210"/>
    </ligand>
</feature>
<evidence type="ECO:0000255" key="1">
    <source>
        <dbReference type="HAMAP-Rule" id="MF_01559"/>
    </source>
</evidence>
<comment type="function">
    <text evidence="1">Catalyzes the conversion of L-lactate to pyruvate. Is coupled to the respiratory chain.</text>
</comment>
<comment type="catalytic activity">
    <reaction evidence="1">
        <text>(S)-lactate + A = pyruvate + AH2</text>
        <dbReference type="Rhea" id="RHEA:45816"/>
        <dbReference type="ChEBI" id="CHEBI:13193"/>
        <dbReference type="ChEBI" id="CHEBI:15361"/>
        <dbReference type="ChEBI" id="CHEBI:16651"/>
        <dbReference type="ChEBI" id="CHEBI:17499"/>
    </reaction>
</comment>
<comment type="cofactor">
    <cofactor evidence="1">
        <name>FMN</name>
        <dbReference type="ChEBI" id="CHEBI:58210"/>
    </cofactor>
</comment>
<comment type="subcellular location">
    <subcellularLocation>
        <location evidence="1">Cell inner membrane</location>
        <topology evidence="1">Peripheral membrane protein</topology>
    </subcellularLocation>
</comment>
<comment type="similarity">
    <text evidence="1">Belongs to the FMN-dependent alpha-hydroxy acid dehydrogenase family.</text>
</comment>
<reference key="1">
    <citation type="submission" date="2008-06" db="EMBL/GenBank/DDBJ databases">
        <title>Genome and proteome analysis of A. pleuropneumoniae serotype 7.</title>
        <authorList>
            <person name="Linke B."/>
            <person name="Buettner F."/>
            <person name="Martinez-Arias R."/>
            <person name="Goesmann A."/>
            <person name="Baltes N."/>
            <person name="Tegetmeyer H."/>
            <person name="Singh M."/>
            <person name="Gerlach G.F."/>
        </authorList>
    </citation>
    <scope>NUCLEOTIDE SEQUENCE [LARGE SCALE GENOMIC DNA]</scope>
    <source>
        <strain>AP76</strain>
    </source>
</reference>
<name>LLDD_ACTP7</name>
<accession>B3GZA5</accession>
<dbReference type="EC" id="1.1.-.-" evidence="1"/>
<dbReference type="EMBL" id="CP001091">
    <property type="protein sequence ID" value="ACE62591.1"/>
    <property type="molecule type" value="Genomic_DNA"/>
</dbReference>
<dbReference type="RefSeq" id="WP_005599497.1">
    <property type="nucleotide sequence ID" value="NC_010939.1"/>
</dbReference>
<dbReference type="SMR" id="B3GZA5"/>
<dbReference type="GeneID" id="48600155"/>
<dbReference type="KEGG" id="apa:APP7_1939"/>
<dbReference type="HOGENOM" id="CLU_020639_0_0_6"/>
<dbReference type="Proteomes" id="UP000001226">
    <property type="component" value="Chromosome"/>
</dbReference>
<dbReference type="GO" id="GO:0005886">
    <property type="term" value="C:plasma membrane"/>
    <property type="evidence" value="ECO:0007669"/>
    <property type="project" value="UniProtKB-SubCell"/>
</dbReference>
<dbReference type="GO" id="GO:0010181">
    <property type="term" value="F:FMN binding"/>
    <property type="evidence" value="ECO:0007669"/>
    <property type="project" value="InterPro"/>
</dbReference>
<dbReference type="GO" id="GO:0004459">
    <property type="term" value="F:L-lactate dehydrogenase activity"/>
    <property type="evidence" value="ECO:0007669"/>
    <property type="project" value="UniProtKB-UniRule"/>
</dbReference>
<dbReference type="GO" id="GO:0009060">
    <property type="term" value="P:aerobic respiration"/>
    <property type="evidence" value="ECO:0007669"/>
    <property type="project" value="TreeGrafter"/>
</dbReference>
<dbReference type="GO" id="GO:0006089">
    <property type="term" value="P:lactate metabolic process"/>
    <property type="evidence" value="ECO:0007669"/>
    <property type="project" value="UniProtKB-UniRule"/>
</dbReference>
<dbReference type="CDD" id="cd02809">
    <property type="entry name" value="alpha_hydroxyacid_oxid_FMN"/>
    <property type="match status" value="1"/>
</dbReference>
<dbReference type="FunFam" id="3.20.20.70:FF:000029">
    <property type="entry name" value="L-lactate dehydrogenase"/>
    <property type="match status" value="1"/>
</dbReference>
<dbReference type="Gene3D" id="3.20.20.70">
    <property type="entry name" value="Aldolase class I"/>
    <property type="match status" value="1"/>
</dbReference>
<dbReference type="HAMAP" id="MF_01559">
    <property type="entry name" value="L_lact_dehydr"/>
    <property type="match status" value="1"/>
</dbReference>
<dbReference type="InterPro" id="IPR013785">
    <property type="entry name" value="Aldolase_TIM"/>
</dbReference>
<dbReference type="InterPro" id="IPR012133">
    <property type="entry name" value="Alpha-hydoxy_acid_DH_FMN"/>
</dbReference>
<dbReference type="InterPro" id="IPR000262">
    <property type="entry name" value="FMN-dep_DH"/>
</dbReference>
<dbReference type="InterPro" id="IPR037396">
    <property type="entry name" value="FMN_HAD"/>
</dbReference>
<dbReference type="InterPro" id="IPR008259">
    <property type="entry name" value="FMN_hydac_DH_AS"/>
</dbReference>
<dbReference type="InterPro" id="IPR020920">
    <property type="entry name" value="LldD"/>
</dbReference>
<dbReference type="NCBIfam" id="NF033901">
    <property type="entry name" value="L_lactate_LldD"/>
    <property type="match status" value="1"/>
</dbReference>
<dbReference type="NCBIfam" id="NF008398">
    <property type="entry name" value="PRK11197.1"/>
    <property type="match status" value="1"/>
</dbReference>
<dbReference type="PANTHER" id="PTHR10578:SF85">
    <property type="entry name" value="L-LACTATE DEHYDROGENASE"/>
    <property type="match status" value="1"/>
</dbReference>
<dbReference type="PANTHER" id="PTHR10578">
    <property type="entry name" value="S -2-HYDROXY-ACID OXIDASE-RELATED"/>
    <property type="match status" value="1"/>
</dbReference>
<dbReference type="Pfam" id="PF01070">
    <property type="entry name" value="FMN_dh"/>
    <property type="match status" value="1"/>
</dbReference>
<dbReference type="PIRSF" id="PIRSF000138">
    <property type="entry name" value="Al-hdrx_acd_dh"/>
    <property type="match status" value="1"/>
</dbReference>
<dbReference type="SUPFAM" id="SSF51395">
    <property type="entry name" value="FMN-linked oxidoreductases"/>
    <property type="match status" value="1"/>
</dbReference>
<dbReference type="PROSITE" id="PS00557">
    <property type="entry name" value="FMN_HYDROXY_ACID_DH_1"/>
    <property type="match status" value="1"/>
</dbReference>
<dbReference type="PROSITE" id="PS51349">
    <property type="entry name" value="FMN_HYDROXY_ACID_DH_2"/>
    <property type="match status" value="1"/>
</dbReference>
<gene>
    <name evidence="1" type="primary">lldD</name>
    <name type="ordered locus">APP7_1939</name>
</gene>